<keyword id="KW-0963">Cytoplasm</keyword>
<keyword id="KW-0396">Initiation factor</keyword>
<keyword id="KW-0648">Protein biosynthesis</keyword>
<keyword id="KW-1185">Reference proteome</keyword>
<organism>
    <name type="scientific">Aspergillus terreus (strain NIH 2624 / FGSC A1156)</name>
    <dbReference type="NCBI Taxonomy" id="341663"/>
    <lineage>
        <taxon>Eukaryota</taxon>
        <taxon>Fungi</taxon>
        <taxon>Dikarya</taxon>
        <taxon>Ascomycota</taxon>
        <taxon>Pezizomycotina</taxon>
        <taxon>Eurotiomycetes</taxon>
        <taxon>Eurotiomycetidae</taxon>
        <taxon>Eurotiales</taxon>
        <taxon>Aspergillaceae</taxon>
        <taxon>Aspergillus</taxon>
        <taxon>Aspergillus subgen. Circumdati</taxon>
    </lineage>
</organism>
<proteinExistence type="inferred from homology"/>
<sequence>MAANVPPSAETLLSGAAAHPPKTAEEIANQYDLLPKLIPYLDRHLVFPLLEFSSGQDDDKEVVRAKYELLKHTNMTDYVANLWKEINNSDTIPDEFVKKREEVLAKLENYQEESSKITELLQDEAVVGNLRSDKVANLRFLEEQHGVTLDMVNSLYDYGRFQYSCGSYGTAAELLYQFRVLSTDNDKVASATWGKLASEILTTSWEGAMEEVQKVKESIETRLFNNPLGQLENRSWLIHWSLFPFFNYDPARDVLTDLFFSPAYINTIQTNCPWILRYLAAAVITNRNRAHKNSSAYQKQLKDLIRVVRQEGYEYSDPITDFVKALYIDFDFEEAQKKLGEAEDVLRSDFFLVSAADAFVEAARHLISESYCKIHQRIDIKDLSTRLGLNQDEGEKWIVNLIRDTRVDAKIDYKEGTVIMNHPPQSVYQQVIEKTKGAFFRTQVLR</sequence>
<comment type="function">
    <text evidence="1">Component of the eukaryotic translation initiation factor 3 (eIF-3) complex, which is involved in protein synthesis of a specialized repertoire of mRNAs and, together with other initiation factors, stimulates binding of mRNA and methionyl-tRNAi to the 40S ribosome. The eIF-3 complex specifically targets and initiates translation of a subset of mRNAs involved in cell proliferation.</text>
</comment>
<comment type="subunit">
    <text evidence="1">Component of the eukaryotic translation initiation factor 3 (eIF-3) complex.</text>
</comment>
<comment type="subcellular location">
    <subcellularLocation>
        <location evidence="1">Cytoplasm</location>
    </subcellularLocation>
</comment>
<comment type="similarity">
    <text evidence="1">Belongs to the eIF-3 subunit E family.</text>
</comment>
<feature type="chain" id="PRO_0000365983" description="Eukaryotic translation initiation factor 3 subunit E">
    <location>
        <begin position="1"/>
        <end position="446"/>
    </location>
</feature>
<feature type="domain" description="PCI" evidence="2">
    <location>
        <begin position="256"/>
        <end position="425"/>
    </location>
</feature>
<reference key="1">
    <citation type="submission" date="2005-09" db="EMBL/GenBank/DDBJ databases">
        <title>Annotation of the Aspergillus terreus NIH2624 genome.</title>
        <authorList>
            <person name="Birren B.W."/>
            <person name="Lander E.S."/>
            <person name="Galagan J.E."/>
            <person name="Nusbaum C."/>
            <person name="Devon K."/>
            <person name="Henn M."/>
            <person name="Ma L.-J."/>
            <person name="Jaffe D.B."/>
            <person name="Butler J."/>
            <person name="Alvarez P."/>
            <person name="Gnerre S."/>
            <person name="Grabherr M."/>
            <person name="Kleber M."/>
            <person name="Mauceli E.W."/>
            <person name="Brockman W."/>
            <person name="Rounsley S."/>
            <person name="Young S.K."/>
            <person name="LaButti K."/>
            <person name="Pushparaj V."/>
            <person name="DeCaprio D."/>
            <person name="Crawford M."/>
            <person name="Koehrsen M."/>
            <person name="Engels R."/>
            <person name="Montgomery P."/>
            <person name="Pearson M."/>
            <person name="Howarth C."/>
            <person name="Larson L."/>
            <person name="Luoma S."/>
            <person name="White J."/>
            <person name="Alvarado L."/>
            <person name="Kodira C.D."/>
            <person name="Zeng Q."/>
            <person name="Oleary S."/>
            <person name="Yandava C."/>
            <person name="Denning D.W."/>
            <person name="Nierman W.C."/>
            <person name="Milne T."/>
            <person name="Madden K."/>
        </authorList>
    </citation>
    <scope>NUCLEOTIDE SEQUENCE [LARGE SCALE GENOMIC DNA]</scope>
    <source>
        <strain>NIH 2624 / FGSC A1156</strain>
    </source>
</reference>
<protein>
    <recommendedName>
        <fullName evidence="1">Eukaryotic translation initiation factor 3 subunit E</fullName>
        <shortName evidence="1">eIF3e</shortName>
    </recommendedName>
</protein>
<dbReference type="EMBL" id="CH476599">
    <property type="protein sequence ID" value="EAU35118.1"/>
    <property type="molecule type" value="Genomic_DNA"/>
</dbReference>
<dbReference type="RefSeq" id="XP_001213849.1">
    <property type="nucleotide sequence ID" value="XM_001213849.1"/>
</dbReference>
<dbReference type="SMR" id="Q0CNR3"/>
<dbReference type="STRING" id="341663.Q0CNR3"/>
<dbReference type="EnsemblFungi" id="EAU35118">
    <property type="protein sequence ID" value="EAU35118"/>
    <property type="gene ID" value="ATEG_04671"/>
</dbReference>
<dbReference type="GeneID" id="4320481"/>
<dbReference type="VEuPathDB" id="FungiDB:ATEG_04671"/>
<dbReference type="eggNOG" id="KOG2758">
    <property type="taxonomic scope" value="Eukaryota"/>
</dbReference>
<dbReference type="HOGENOM" id="CLU_031132_0_0_1"/>
<dbReference type="OMA" id="NCPWILR"/>
<dbReference type="OrthoDB" id="417252at2759"/>
<dbReference type="Proteomes" id="UP000007963">
    <property type="component" value="Unassembled WGS sequence"/>
</dbReference>
<dbReference type="GO" id="GO:0016282">
    <property type="term" value="C:eukaryotic 43S preinitiation complex"/>
    <property type="evidence" value="ECO:0007669"/>
    <property type="project" value="UniProtKB-UniRule"/>
</dbReference>
<dbReference type="GO" id="GO:0033290">
    <property type="term" value="C:eukaryotic 48S preinitiation complex"/>
    <property type="evidence" value="ECO:0007669"/>
    <property type="project" value="UniProtKB-UniRule"/>
</dbReference>
<dbReference type="GO" id="GO:0071540">
    <property type="term" value="C:eukaryotic translation initiation factor 3 complex, eIF3e"/>
    <property type="evidence" value="ECO:0007669"/>
    <property type="project" value="UniProtKB-UniRule"/>
</dbReference>
<dbReference type="GO" id="GO:0003743">
    <property type="term" value="F:translation initiation factor activity"/>
    <property type="evidence" value="ECO:0007669"/>
    <property type="project" value="UniProtKB-UniRule"/>
</dbReference>
<dbReference type="GO" id="GO:0001732">
    <property type="term" value="P:formation of cytoplasmic translation initiation complex"/>
    <property type="evidence" value="ECO:0007669"/>
    <property type="project" value="UniProtKB-UniRule"/>
</dbReference>
<dbReference type="CDD" id="cd21378">
    <property type="entry name" value="eIF3E"/>
    <property type="match status" value="1"/>
</dbReference>
<dbReference type="Gene3D" id="1.25.40.570">
    <property type="match status" value="1"/>
</dbReference>
<dbReference type="HAMAP" id="MF_03004">
    <property type="entry name" value="eIF3e"/>
    <property type="match status" value="1"/>
</dbReference>
<dbReference type="InterPro" id="IPR016650">
    <property type="entry name" value="eIF3e"/>
</dbReference>
<dbReference type="InterPro" id="IPR019010">
    <property type="entry name" value="eIF3e_N"/>
</dbReference>
<dbReference type="InterPro" id="IPR000717">
    <property type="entry name" value="PCI_dom"/>
</dbReference>
<dbReference type="InterPro" id="IPR036390">
    <property type="entry name" value="WH_DNA-bd_sf"/>
</dbReference>
<dbReference type="PANTHER" id="PTHR10317">
    <property type="entry name" value="EUKARYOTIC TRANSLATION INITIATION FACTOR 3 SUBUNIT E"/>
    <property type="match status" value="1"/>
</dbReference>
<dbReference type="Pfam" id="PF09440">
    <property type="entry name" value="eIF3_N"/>
    <property type="match status" value="1"/>
</dbReference>
<dbReference type="Pfam" id="PF21357">
    <property type="entry name" value="EIF3E_C"/>
    <property type="match status" value="1"/>
</dbReference>
<dbReference type="Pfam" id="PF01399">
    <property type="entry name" value="PCI"/>
    <property type="match status" value="1"/>
</dbReference>
<dbReference type="PIRSF" id="PIRSF016255">
    <property type="entry name" value="eIF3e_su6"/>
    <property type="match status" value="1"/>
</dbReference>
<dbReference type="SMART" id="SM01186">
    <property type="entry name" value="eIF3_N"/>
    <property type="match status" value="1"/>
</dbReference>
<dbReference type="SMART" id="SM00088">
    <property type="entry name" value="PINT"/>
    <property type="match status" value="1"/>
</dbReference>
<dbReference type="SUPFAM" id="SSF46785">
    <property type="entry name" value="Winged helix' DNA-binding domain"/>
    <property type="match status" value="1"/>
</dbReference>
<dbReference type="PROSITE" id="PS50250">
    <property type="entry name" value="PCI"/>
    <property type="match status" value="1"/>
</dbReference>
<accession>Q0CNR3</accession>
<evidence type="ECO:0000255" key="1">
    <source>
        <dbReference type="HAMAP-Rule" id="MF_03004"/>
    </source>
</evidence>
<evidence type="ECO:0000255" key="2">
    <source>
        <dbReference type="PROSITE-ProRule" id="PRU01185"/>
    </source>
</evidence>
<name>EIF3E_ASPTN</name>
<gene>
    <name type="primary">int6</name>
    <name type="ORF">ATEG_04671</name>
</gene>